<proteinExistence type="inferred from homology"/>
<evidence type="ECO:0000255" key="1">
    <source>
        <dbReference type="HAMAP-Rule" id="MF_03057"/>
    </source>
</evidence>
<sequence>MLRQFIISRVGRRLQLPMITQSRLASDLDKTEYTTPGEIVDYDDPPHLPVPEYPVRPDEPLETRKQRLLYQSRKRGMLENDLLLSTFVAKHLKDFNAEQTAEYDQLINGVSNDWDIFYWATDTKPTPPQFDTEIMRLLKEHVKNHEKVQRIRQPDL</sequence>
<name>SDF2B_DROSE</name>
<protein>
    <recommendedName>
        <fullName evidence="1">Succinate dehydrogenase assembly factor 2-B, mitochondrial</fullName>
        <shortName evidence="1">SDH assembly factor 2-B</shortName>
        <shortName evidence="1">SDHAF2-B</shortName>
    </recommendedName>
</protein>
<feature type="transit peptide" description="Mitochondrion" evidence="1">
    <location>
        <begin position="1"/>
        <end position="24"/>
    </location>
</feature>
<feature type="chain" id="PRO_0000383176" description="Succinate dehydrogenase assembly factor 2-B, mitochondrial">
    <location>
        <begin position="25"/>
        <end position="156"/>
    </location>
</feature>
<gene>
    <name type="ORF">GM20523</name>
</gene>
<keyword id="KW-0143">Chaperone</keyword>
<keyword id="KW-0496">Mitochondrion</keyword>
<keyword id="KW-1185">Reference proteome</keyword>
<keyword id="KW-0809">Transit peptide</keyword>
<reference key="1">
    <citation type="journal article" date="2007" name="Nature">
        <title>Evolution of genes and genomes on the Drosophila phylogeny.</title>
        <authorList>
            <consortium name="Drosophila 12 genomes consortium"/>
        </authorList>
    </citation>
    <scope>NUCLEOTIDE SEQUENCE [LARGE SCALE GENOMIC DNA]</scope>
    <source>
        <strain>Rob3c / Tucson 14021-0248.25</strain>
    </source>
</reference>
<dbReference type="EMBL" id="CH480816">
    <property type="protein sequence ID" value="EDW47263.1"/>
    <property type="molecule type" value="Genomic_DNA"/>
</dbReference>
<dbReference type="RefSeq" id="XP_002033250.1">
    <property type="nucleotide sequence ID" value="XM_002033214.1"/>
</dbReference>
<dbReference type="SMR" id="B4HMQ1"/>
<dbReference type="STRING" id="7238.B4HMQ1"/>
<dbReference type="EnsemblMetazoa" id="FBtr0203508">
    <property type="protein sequence ID" value="FBpp0202000"/>
    <property type="gene ID" value="FBgn0175405"/>
</dbReference>
<dbReference type="HOGENOM" id="CLU_103054_0_3_1"/>
<dbReference type="OMA" id="DTEIMRM"/>
<dbReference type="PhylomeDB" id="B4HMQ1"/>
<dbReference type="Proteomes" id="UP000001292">
    <property type="component" value="Unassembled WGS sequence"/>
</dbReference>
<dbReference type="GO" id="GO:0005759">
    <property type="term" value="C:mitochondrial matrix"/>
    <property type="evidence" value="ECO:0007669"/>
    <property type="project" value="UniProtKB-SubCell"/>
</dbReference>
<dbReference type="GO" id="GO:0005739">
    <property type="term" value="C:mitochondrion"/>
    <property type="evidence" value="ECO:0000250"/>
    <property type="project" value="UniProtKB"/>
</dbReference>
<dbReference type="GO" id="GO:0006121">
    <property type="term" value="P:mitochondrial electron transport, succinate to ubiquinone"/>
    <property type="evidence" value="ECO:0000250"/>
    <property type="project" value="UniProtKB"/>
</dbReference>
<dbReference type="GO" id="GO:0034553">
    <property type="term" value="P:mitochondrial respiratory chain complex II assembly"/>
    <property type="evidence" value="ECO:0007669"/>
    <property type="project" value="TreeGrafter"/>
</dbReference>
<dbReference type="GO" id="GO:0018293">
    <property type="term" value="P:protein-FAD linkage"/>
    <property type="evidence" value="ECO:0000250"/>
    <property type="project" value="UniProtKB"/>
</dbReference>
<dbReference type="GO" id="GO:0006099">
    <property type="term" value="P:tricarboxylic acid cycle"/>
    <property type="evidence" value="ECO:0007669"/>
    <property type="project" value="TreeGrafter"/>
</dbReference>
<dbReference type="FunFam" id="1.10.150.250:FF:000002">
    <property type="entry name" value="Succinate dehydrogenase assembly factor 2, mitochondrial"/>
    <property type="match status" value="1"/>
</dbReference>
<dbReference type="Gene3D" id="1.10.150.250">
    <property type="entry name" value="Flavinator of succinate dehydrogenase"/>
    <property type="match status" value="1"/>
</dbReference>
<dbReference type="HAMAP" id="MF_03057">
    <property type="entry name" value="SDHAF2"/>
    <property type="match status" value="1"/>
</dbReference>
<dbReference type="InterPro" id="IPR005631">
    <property type="entry name" value="SDH"/>
</dbReference>
<dbReference type="InterPro" id="IPR036714">
    <property type="entry name" value="SDH_sf"/>
</dbReference>
<dbReference type="InterPro" id="IPR028882">
    <property type="entry name" value="SDHAF2"/>
</dbReference>
<dbReference type="PANTHER" id="PTHR12469">
    <property type="entry name" value="PROTEIN EMI5 HOMOLOG, MITOCHONDRIAL"/>
    <property type="match status" value="1"/>
</dbReference>
<dbReference type="PANTHER" id="PTHR12469:SF2">
    <property type="entry name" value="SUCCINATE DEHYDROGENASE ASSEMBLY FACTOR 2, MITOCHONDRIAL"/>
    <property type="match status" value="1"/>
</dbReference>
<dbReference type="Pfam" id="PF03937">
    <property type="entry name" value="Sdh5"/>
    <property type="match status" value="1"/>
</dbReference>
<dbReference type="SUPFAM" id="SSF109910">
    <property type="entry name" value="YgfY-like"/>
    <property type="match status" value="1"/>
</dbReference>
<organism>
    <name type="scientific">Drosophila sechellia</name>
    <name type="common">Fruit fly</name>
    <dbReference type="NCBI Taxonomy" id="7238"/>
    <lineage>
        <taxon>Eukaryota</taxon>
        <taxon>Metazoa</taxon>
        <taxon>Ecdysozoa</taxon>
        <taxon>Arthropoda</taxon>
        <taxon>Hexapoda</taxon>
        <taxon>Insecta</taxon>
        <taxon>Pterygota</taxon>
        <taxon>Neoptera</taxon>
        <taxon>Endopterygota</taxon>
        <taxon>Diptera</taxon>
        <taxon>Brachycera</taxon>
        <taxon>Muscomorpha</taxon>
        <taxon>Ephydroidea</taxon>
        <taxon>Drosophilidae</taxon>
        <taxon>Drosophila</taxon>
        <taxon>Sophophora</taxon>
    </lineage>
</organism>
<comment type="function">
    <text evidence="1">Plays an essential role in the assembly of succinate dehydrogenase (SDH), an enzyme complex (also referred to as respiratory complex II) that is a component of both the tricarboxylic acid (TCA) cycle and the mitochondrial electron transport chain, and which couples the oxidation of succinate to fumarate with the reduction of ubiquinone (coenzyme Q) to ubiquinol. Required for flavinylation (covalent attachment of FAD) of the flavoprotein subunit of the SDH catalytic dimer.</text>
</comment>
<comment type="subunit">
    <text evidence="1">Interacts with the flavoprotein subunit within the SDH catalytic dimer.</text>
</comment>
<comment type="subcellular location">
    <subcellularLocation>
        <location evidence="1">Mitochondrion matrix</location>
    </subcellularLocation>
</comment>
<comment type="similarity">
    <text evidence="1">Belongs to the SDHAF2 family.</text>
</comment>
<accession>B4HMQ1</accession>